<sequence>MIKILGIESSCDDTAVSIITENREILSNIIISQNTEHTVFGGVVPEIAARSHLSHLDKALKNVLKESNTKLTDISTIAATSGPGLIGSVIVGSMFARSLSSALKKPFIAINHLEGHALTARLTDNIPYPYLLLLASGGHCQFVAVLGLGKYKILGSTIDDAVGEAFDKVAKMLNLAFPGGPEIEKRATLGDPNKYKFPKPIINSGNCNMSFSGLKTAVRTLIMNLKEINDTVINDIAASFQFTIGEILSSKVQDAIRAYEQITNNFDKKNIVIAGGVAANKYLQEILSSCAKTYGYRLIYPPIHLCTDNAAMIAYAGLERYNNKLFTPLNFCPKARWSLEDISN</sequence>
<reference key="1">
    <citation type="journal article" date="2007" name="Genome Res.">
        <title>Lateral gene transfer between obligate intracellular bacteria: evidence from the Rickettsia massiliae genome.</title>
        <authorList>
            <person name="Blanc G."/>
            <person name="Ogata H."/>
            <person name="Robert C."/>
            <person name="Audic S."/>
            <person name="Claverie J.-M."/>
            <person name="Raoult D."/>
        </authorList>
    </citation>
    <scope>NUCLEOTIDE SEQUENCE [LARGE SCALE GENOMIC DNA]</scope>
    <source>
        <strain>Mtu5</strain>
    </source>
</reference>
<name>TSAD_RICM5</name>
<feature type="chain" id="PRO_1000068574" description="tRNA N6-adenosine threonylcarbamoyltransferase">
    <location>
        <begin position="1"/>
        <end position="344"/>
    </location>
</feature>
<feature type="binding site" evidence="1">
    <location>
        <position position="112"/>
    </location>
    <ligand>
        <name>Fe cation</name>
        <dbReference type="ChEBI" id="CHEBI:24875"/>
    </ligand>
</feature>
<feature type="binding site" evidence="1">
    <location>
        <position position="116"/>
    </location>
    <ligand>
        <name>Fe cation</name>
        <dbReference type="ChEBI" id="CHEBI:24875"/>
    </ligand>
</feature>
<feature type="binding site" evidence="1">
    <location>
        <begin position="134"/>
        <end position="138"/>
    </location>
    <ligand>
        <name>substrate</name>
    </ligand>
</feature>
<feature type="binding site" evidence="1">
    <location>
        <position position="167"/>
    </location>
    <ligand>
        <name>substrate</name>
    </ligand>
</feature>
<feature type="binding site" evidence="1">
    <location>
        <position position="180"/>
    </location>
    <ligand>
        <name>substrate</name>
    </ligand>
</feature>
<feature type="binding site" evidence="1">
    <location>
        <position position="280"/>
    </location>
    <ligand>
        <name>substrate</name>
    </ligand>
</feature>
<feature type="binding site" evidence="1">
    <location>
        <position position="308"/>
    </location>
    <ligand>
        <name>Fe cation</name>
        <dbReference type="ChEBI" id="CHEBI:24875"/>
    </ligand>
</feature>
<dbReference type="EC" id="2.3.1.234" evidence="1"/>
<dbReference type="EMBL" id="CP000683">
    <property type="protein sequence ID" value="ABV84379.1"/>
    <property type="molecule type" value="Genomic_DNA"/>
</dbReference>
<dbReference type="RefSeq" id="WP_012152360.1">
    <property type="nucleotide sequence ID" value="NC_009900.1"/>
</dbReference>
<dbReference type="SMR" id="A8F0E3"/>
<dbReference type="KEGG" id="rms:RMA_0065"/>
<dbReference type="HOGENOM" id="CLU_023208_0_2_5"/>
<dbReference type="Proteomes" id="UP000001311">
    <property type="component" value="Chromosome"/>
</dbReference>
<dbReference type="GO" id="GO:0005737">
    <property type="term" value="C:cytoplasm"/>
    <property type="evidence" value="ECO:0007669"/>
    <property type="project" value="UniProtKB-SubCell"/>
</dbReference>
<dbReference type="GO" id="GO:0005506">
    <property type="term" value="F:iron ion binding"/>
    <property type="evidence" value="ECO:0007669"/>
    <property type="project" value="UniProtKB-UniRule"/>
</dbReference>
<dbReference type="GO" id="GO:0061711">
    <property type="term" value="F:N(6)-L-threonylcarbamoyladenine synthase activity"/>
    <property type="evidence" value="ECO:0007669"/>
    <property type="project" value="UniProtKB-EC"/>
</dbReference>
<dbReference type="GO" id="GO:0002949">
    <property type="term" value="P:tRNA threonylcarbamoyladenosine modification"/>
    <property type="evidence" value="ECO:0007669"/>
    <property type="project" value="UniProtKB-UniRule"/>
</dbReference>
<dbReference type="CDD" id="cd24133">
    <property type="entry name" value="ASKHA_NBD_TsaD_bac"/>
    <property type="match status" value="1"/>
</dbReference>
<dbReference type="FunFam" id="3.30.420.40:FF:000040">
    <property type="entry name" value="tRNA N6-adenosine threonylcarbamoyltransferase"/>
    <property type="match status" value="1"/>
</dbReference>
<dbReference type="Gene3D" id="3.30.420.40">
    <property type="match status" value="2"/>
</dbReference>
<dbReference type="HAMAP" id="MF_01445">
    <property type="entry name" value="TsaD"/>
    <property type="match status" value="1"/>
</dbReference>
<dbReference type="InterPro" id="IPR043129">
    <property type="entry name" value="ATPase_NBD"/>
</dbReference>
<dbReference type="InterPro" id="IPR000905">
    <property type="entry name" value="Gcp-like_dom"/>
</dbReference>
<dbReference type="InterPro" id="IPR017861">
    <property type="entry name" value="KAE1/TsaD"/>
</dbReference>
<dbReference type="InterPro" id="IPR017860">
    <property type="entry name" value="Peptidase_M22_CS"/>
</dbReference>
<dbReference type="InterPro" id="IPR022450">
    <property type="entry name" value="TsaD"/>
</dbReference>
<dbReference type="NCBIfam" id="TIGR00329">
    <property type="entry name" value="gcp_kae1"/>
    <property type="match status" value="1"/>
</dbReference>
<dbReference type="NCBIfam" id="TIGR03723">
    <property type="entry name" value="T6A_TsaD_YgjD"/>
    <property type="match status" value="1"/>
</dbReference>
<dbReference type="PANTHER" id="PTHR11735">
    <property type="entry name" value="TRNA N6-ADENOSINE THREONYLCARBAMOYLTRANSFERASE"/>
    <property type="match status" value="1"/>
</dbReference>
<dbReference type="PANTHER" id="PTHR11735:SF6">
    <property type="entry name" value="TRNA N6-ADENOSINE THREONYLCARBAMOYLTRANSFERASE, MITOCHONDRIAL"/>
    <property type="match status" value="1"/>
</dbReference>
<dbReference type="Pfam" id="PF00814">
    <property type="entry name" value="TsaD"/>
    <property type="match status" value="1"/>
</dbReference>
<dbReference type="PRINTS" id="PR00789">
    <property type="entry name" value="OSIALOPTASE"/>
</dbReference>
<dbReference type="SUPFAM" id="SSF53067">
    <property type="entry name" value="Actin-like ATPase domain"/>
    <property type="match status" value="2"/>
</dbReference>
<dbReference type="PROSITE" id="PS01016">
    <property type="entry name" value="GLYCOPROTEASE"/>
    <property type="match status" value="1"/>
</dbReference>
<comment type="function">
    <text evidence="1">Required for the formation of a threonylcarbamoyl group on adenosine at position 37 (t(6)A37) in tRNAs that read codons beginning with adenine. Is involved in the transfer of the threonylcarbamoyl moiety of threonylcarbamoyl-AMP (TC-AMP) to the N6 group of A37, together with TsaE and TsaB. TsaD likely plays a direct catalytic role in this reaction.</text>
</comment>
<comment type="catalytic activity">
    <reaction evidence="1">
        <text>L-threonylcarbamoyladenylate + adenosine(37) in tRNA = N(6)-L-threonylcarbamoyladenosine(37) in tRNA + AMP + H(+)</text>
        <dbReference type="Rhea" id="RHEA:37059"/>
        <dbReference type="Rhea" id="RHEA-COMP:10162"/>
        <dbReference type="Rhea" id="RHEA-COMP:10163"/>
        <dbReference type="ChEBI" id="CHEBI:15378"/>
        <dbReference type="ChEBI" id="CHEBI:73682"/>
        <dbReference type="ChEBI" id="CHEBI:74411"/>
        <dbReference type="ChEBI" id="CHEBI:74418"/>
        <dbReference type="ChEBI" id="CHEBI:456215"/>
        <dbReference type="EC" id="2.3.1.234"/>
    </reaction>
</comment>
<comment type="cofactor">
    <cofactor evidence="1">
        <name>Fe(2+)</name>
        <dbReference type="ChEBI" id="CHEBI:29033"/>
    </cofactor>
    <text evidence="1">Binds 1 Fe(2+) ion per subunit.</text>
</comment>
<comment type="subcellular location">
    <subcellularLocation>
        <location evidence="1">Cytoplasm</location>
    </subcellularLocation>
</comment>
<comment type="similarity">
    <text evidence="1">Belongs to the KAE1 / TsaD family.</text>
</comment>
<evidence type="ECO:0000255" key="1">
    <source>
        <dbReference type="HAMAP-Rule" id="MF_01445"/>
    </source>
</evidence>
<organism>
    <name type="scientific">Rickettsia massiliae (strain Mtu5)</name>
    <dbReference type="NCBI Taxonomy" id="416276"/>
    <lineage>
        <taxon>Bacteria</taxon>
        <taxon>Pseudomonadati</taxon>
        <taxon>Pseudomonadota</taxon>
        <taxon>Alphaproteobacteria</taxon>
        <taxon>Rickettsiales</taxon>
        <taxon>Rickettsiaceae</taxon>
        <taxon>Rickettsieae</taxon>
        <taxon>Rickettsia</taxon>
        <taxon>spotted fever group</taxon>
    </lineage>
</organism>
<proteinExistence type="inferred from homology"/>
<gene>
    <name evidence="1" type="primary">tsaD</name>
    <name type="synonym">gcp</name>
    <name type="ordered locus">RMA_0065</name>
</gene>
<keyword id="KW-0012">Acyltransferase</keyword>
<keyword id="KW-0963">Cytoplasm</keyword>
<keyword id="KW-0408">Iron</keyword>
<keyword id="KW-0479">Metal-binding</keyword>
<keyword id="KW-0808">Transferase</keyword>
<keyword id="KW-0819">tRNA processing</keyword>
<protein>
    <recommendedName>
        <fullName evidence="1">tRNA N6-adenosine threonylcarbamoyltransferase</fullName>
        <ecNumber evidence="1">2.3.1.234</ecNumber>
    </recommendedName>
    <alternativeName>
        <fullName evidence="1">N6-L-threonylcarbamoyladenine synthase</fullName>
        <shortName evidence="1">t(6)A synthase</shortName>
    </alternativeName>
    <alternativeName>
        <fullName evidence="1">t(6)A37 threonylcarbamoyladenosine biosynthesis protein TsaD</fullName>
    </alternativeName>
    <alternativeName>
        <fullName evidence="1">tRNA threonylcarbamoyladenosine biosynthesis protein TsaD</fullName>
    </alternativeName>
</protein>
<accession>A8F0E3</accession>